<accession>P13732</accession>
<proteinExistence type="evidence at transcript level"/>
<feature type="chain" id="PRO_0000215505" description="Large ribosomal subunit protein eL22">
    <location>
        <begin position="1"/>
        <end position="130"/>
    </location>
</feature>
<feature type="region of interest" description="Disordered" evidence="2">
    <location>
        <begin position="1"/>
        <end position="21"/>
    </location>
</feature>
<feature type="short sequence motif" description="Nuclear localization signal" evidence="1">
    <location>
        <begin position="17"/>
        <end position="20"/>
    </location>
</feature>
<keyword id="KW-0687">Ribonucleoprotein</keyword>
<keyword id="KW-0689">Ribosomal protein</keyword>
<gene>
    <name type="primary">RPL22</name>
</gene>
<evidence type="ECO:0000255" key="1"/>
<evidence type="ECO:0000256" key="2">
    <source>
        <dbReference type="SAM" id="MobiDB-lite"/>
    </source>
</evidence>
<evidence type="ECO:0000269" key="3">
    <source>
    </source>
</evidence>
<evidence type="ECO:0000305" key="4"/>
<sequence length="130" mass="15126">MPGKTAQKGGRPSGKGKKKKQTLKFTIDCTLPVEDGIMDASNFEQFLQERIKVNGKTKNLTTNIVIERKKSKVTVTSEIAFSKRYLKYLTKKYLKKNNLRDWLRVVAANKESYELRYFQINQDDEEEEDD</sequence>
<reference key="1">
    <citation type="journal article" date="1988" name="DNA">
        <title>A gene expressed in the endoderm of the sea urchin embryo.</title>
        <authorList>
            <person name="Dolecki G.J."/>
            <person name="Lum R."/>
            <person name="Humphreys T."/>
        </authorList>
    </citation>
    <scope>NUCLEOTIDE SEQUENCE [MRNA]</scope>
    <scope>DEVELOPMENTAL STAGE</scope>
</reference>
<name>RL22_TRIGR</name>
<dbReference type="EMBL" id="M22207">
    <property type="protein sequence ID" value="AAA30088.1"/>
    <property type="molecule type" value="mRNA"/>
</dbReference>
<dbReference type="PIR" id="A30033">
    <property type="entry name" value="A30033"/>
</dbReference>
<dbReference type="SMR" id="P13732"/>
<dbReference type="GO" id="GO:1990904">
    <property type="term" value="C:ribonucleoprotein complex"/>
    <property type="evidence" value="ECO:0007669"/>
    <property type="project" value="UniProtKB-KW"/>
</dbReference>
<dbReference type="GO" id="GO:0005840">
    <property type="term" value="C:ribosome"/>
    <property type="evidence" value="ECO:0007669"/>
    <property type="project" value="UniProtKB-KW"/>
</dbReference>
<dbReference type="GO" id="GO:0003723">
    <property type="term" value="F:RNA binding"/>
    <property type="evidence" value="ECO:0007669"/>
    <property type="project" value="TreeGrafter"/>
</dbReference>
<dbReference type="GO" id="GO:0003735">
    <property type="term" value="F:structural constituent of ribosome"/>
    <property type="evidence" value="ECO:0007669"/>
    <property type="project" value="InterPro"/>
</dbReference>
<dbReference type="GO" id="GO:0002181">
    <property type="term" value="P:cytoplasmic translation"/>
    <property type="evidence" value="ECO:0007669"/>
    <property type="project" value="TreeGrafter"/>
</dbReference>
<dbReference type="FunFam" id="3.30.1360.210:FF:000001">
    <property type="entry name" value="60S ribosomal protein L22 1"/>
    <property type="match status" value="1"/>
</dbReference>
<dbReference type="Gene3D" id="3.30.1360.210">
    <property type="match status" value="1"/>
</dbReference>
<dbReference type="InterPro" id="IPR002671">
    <property type="entry name" value="Ribosomal_eL22"/>
</dbReference>
<dbReference type="InterPro" id="IPR038526">
    <property type="entry name" value="Ribosomal_eL22_sf"/>
</dbReference>
<dbReference type="PANTHER" id="PTHR10064">
    <property type="entry name" value="60S RIBOSOMAL PROTEIN L22"/>
    <property type="match status" value="1"/>
</dbReference>
<dbReference type="PANTHER" id="PTHR10064:SF0">
    <property type="entry name" value="FI24544P1-RELATED"/>
    <property type="match status" value="1"/>
</dbReference>
<dbReference type="Pfam" id="PF01776">
    <property type="entry name" value="Ribosomal_L22e"/>
    <property type="match status" value="1"/>
</dbReference>
<protein>
    <recommendedName>
        <fullName evidence="4">Large ribosomal subunit protein eL22</fullName>
    </recommendedName>
    <alternativeName>
        <fullName>60S ribosomal protein L22</fullName>
    </alternativeName>
    <alternativeName>
        <fullName>Development-specific protein 217</fullName>
    </alternativeName>
</protein>
<comment type="developmental stage">
    <text evidence="3">This protein is predominantly expressed in the endoderm of sea urchin pluteus stage larvae.</text>
</comment>
<comment type="similarity">
    <text evidence="4">Belongs to the eukaryotic ribosomal protein eL22 family.</text>
</comment>
<organism>
    <name type="scientific">Tripneustes gratilla</name>
    <name type="common">Hawaian sea urchin</name>
    <name type="synonym">Echinus gratilla</name>
    <dbReference type="NCBI Taxonomy" id="7673"/>
    <lineage>
        <taxon>Eukaryota</taxon>
        <taxon>Metazoa</taxon>
        <taxon>Echinodermata</taxon>
        <taxon>Eleutherozoa</taxon>
        <taxon>Echinozoa</taxon>
        <taxon>Echinoidea</taxon>
        <taxon>Euechinoidea</taxon>
        <taxon>Echinacea</taxon>
        <taxon>Temnopleuroida</taxon>
        <taxon>Toxopneustidae</taxon>
        <taxon>Tripneustes</taxon>
    </lineage>
</organism>